<reference key="1">
    <citation type="journal article" date="1995" name="EMBO J.">
        <title>Identification and characterization of three members of the human SR family of pre-mRNA splicing factors.</title>
        <authorList>
            <person name="Screaton G.R."/>
            <person name="Caceres J.F."/>
            <person name="Mayeda A."/>
            <person name="Bell M.V."/>
            <person name="Plebanski M."/>
            <person name="Jackson D.G."/>
            <person name="Bell J.I."/>
            <person name="Krainer A.R."/>
        </authorList>
    </citation>
    <scope>NUCLEOTIDE SEQUENCE [MRNA]</scope>
    <scope>FUNCTION</scope>
    <source>
        <tissue>Colon</tissue>
    </source>
</reference>
<reference key="2">
    <citation type="submission" date="1997-01" db="EMBL/GenBank/DDBJ databases">
        <title>Transcription map of the 5cM region surrounding the hepatocyte nuclear factor-1a/MODY3 gene on chromosome 12.</title>
        <authorList>
            <person name="Yamagata K."/>
            <person name="Oda N."/>
            <person name="Furuta H."/>
            <person name="Vaxillaire M."/>
            <person name="Southam L."/>
            <person name="Boriraj V."/>
            <person name="Chen X."/>
            <person name="Oda Y."/>
            <person name="Takeda J."/>
            <person name="Yamada S."/>
            <person name="Nishigori H."/>
            <person name="Lebeau M.M."/>
            <person name="Lathrop M."/>
            <person name="Cox R.D."/>
            <person name="Bell G.I."/>
        </authorList>
    </citation>
    <scope>NUCLEOTIDE SEQUENCE [GENOMIC DNA]</scope>
</reference>
<reference key="3">
    <citation type="journal article" date="2006" name="Nature">
        <title>The finished DNA sequence of human chromosome 12.</title>
        <authorList>
            <person name="Scherer S.E."/>
            <person name="Muzny D.M."/>
            <person name="Buhay C.J."/>
            <person name="Chen R."/>
            <person name="Cree A."/>
            <person name="Ding Y."/>
            <person name="Dugan-Rocha S."/>
            <person name="Gill R."/>
            <person name="Gunaratne P."/>
            <person name="Harris R.A."/>
            <person name="Hawes A.C."/>
            <person name="Hernandez J."/>
            <person name="Hodgson A.V."/>
            <person name="Hume J."/>
            <person name="Jackson A."/>
            <person name="Khan Z.M."/>
            <person name="Kovar-Smith C."/>
            <person name="Lewis L.R."/>
            <person name="Lozado R.J."/>
            <person name="Metzker M.L."/>
            <person name="Milosavljevic A."/>
            <person name="Miner G.R."/>
            <person name="Montgomery K.T."/>
            <person name="Morgan M.B."/>
            <person name="Nazareth L.V."/>
            <person name="Scott G."/>
            <person name="Sodergren E."/>
            <person name="Song X.-Z."/>
            <person name="Steffen D."/>
            <person name="Lovering R.C."/>
            <person name="Wheeler D.A."/>
            <person name="Worley K.C."/>
            <person name="Yuan Y."/>
            <person name="Zhang Z."/>
            <person name="Adams C.Q."/>
            <person name="Ansari-Lari M.A."/>
            <person name="Ayele M."/>
            <person name="Brown M.J."/>
            <person name="Chen G."/>
            <person name="Chen Z."/>
            <person name="Clerc-Blankenburg K.P."/>
            <person name="Davis C."/>
            <person name="Delgado O."/>
            <person name="Dinh H.H."/>
            <person name="Draper H."/>
            <person name="Gonzalez-Garay M.L."/>
            <person name="Havlak P."/>
            <person name="Jackson L.R."/>
            <person name="Jacob L.S."/>
            <person name="Kelly S.H."/>
            <person name="Li L."/>
            <person name="Li Z."/>
            <person name="Liu J."/>
            <person name="Liu W."/>
            <person name="Lu J."/>
            <person name="Maheshwari M."/>
            <person name="Nguyen B.-V."/>
            <person name="Okwuonu G.O."/>
            <person name="Pasternak S."/>
            <person name="Perez L.M."/>
            <person name="Plopper F.J.H."/>
            <person name="Santibanez J."/>
            <person name="Shen H."/>
            <person name="Tabor P.E."/>
            <person name="Verduzco D."/>
            <person name="Waldron L."/>
            <person name="Wang Q."/>
            <person name="Williams G.A."/>
            <person name="Zhang J."/>
            <person name="Zhou J."/>
            <person name="Allen C.C."/>
            <person name="Amin A.G."/>
            <person name="Anyalebechi V."/>
            <person name="Bailey M."/>
            <person name="Barbaria J.A."/>
            <person name="Bimage K.E."/>
            <person name="Bryant N.P."/>
            <person name="Burch P.E."/>
            <person name="Burkett C.E."/>
            <person name="Burrell K.L."/>
            <person name="Calderon E."/>
            <person name="Cardenas V."/>
            <person name="Carter K."/>
            <person name="Casias K."/>
            <person name="Cavazos I."/>
            <person name="Cavazos S.R."/>
            <person name="Ceasar H."/>
            <person name="Chacko J."/>
            <person name="Chan S.N."/>
            <person name="Chavez D."/>
            <person name="Christopoulos C."/>
            <person name="Chu J."/>
            <person name="Cockrell R."/>
            <person name="Cox C.D."/>
            <person name="Dang M."/>
            <person name="Dathorne S.R."/>
            <person name="David R."/>
            <person name="Davis C.M."/>
            <person name="Davy-Carroll L."/>
            <person name="Deshazo D.R."/>
            <person name="Donlin J.E."/>
            <person name="D'Souza L."/>
            <person name="Eaves K.A."/>
            <person name="Egan A."/>
            <person name="Emery-Cohen A.J."/>
            <person name="Escotto M."/>
            <person name="Flagg N."/>
            <person name="Forbes L.D."/>
            <person name="Gabisi A.M."/>
            <person name="Garza M."/>
            <person name="Hamilton C."/>
            <person name="Henderson N."/>
            <person name="Hernandez O."/>
            <person name="Hines S."/>
            <person name="Hogues M.E."/>
            <person name="Huang M."/>
            <person name="Idlebird D.G."/>
            <person name="Johnson R."/>
            <person name="Jolivet A."/>
            <person name="Jones S."/>
            <person name="Kagan R."/>
            <person name="King L.M."/>
            <person name="Leal B."/>
            <person name="Lebow H."/>
            <person name="Lee S."/>
            <person name="LeVan J.M."/>
            <person name="Lewis L.C."/>
            <person name="London P."/>
            <person name="Lorensuhewa L.M."/>
            <person name="Loulseged H."/>
            <person name="Lovett D.A."/>
            <person name="Lucier A."/>
            <person name="Lucier R.L."/>
            <person name="Ma J."/>
            <person name="Madu R.C."/>
            <person name="Mapua P."/>
            <person name="Martindale A.D."/>
            <person name="Martinez E."/>
            <person name="Massey E."/>
            <person name="Mawhiney S."/>
            <person name="Meador M.G."/>
            <person name="Mendez S."/>
            <person name="Mercado C."/>
            <person name="Mercado I.C."/>
            <person name="Merritt C.E."/>
            <person name="Miner Z.L."/>
            <person name="Minja E."/>
            <person name="Mitchell T."/>
            <person name="Mohabbat F."/>
            <person name="Mohabbat K."/>
            <person name="Montgomery B."/>
            <person name="Moore N."/>
            <person name="Morris S."/>
            <person name="Munidasa M."/>
            <person name="Ngo R.N."/>
            <person name="Nguyen N.B."/>
            <person name="Nickerson E."/>
            <person name="Nwaokelemeh O.O."/>
            <person name="Nwokenkwo S."/>
            <person name="Obregon M."/>
            <person name="Oguh M."/>
            <person name="Oragunye N."/>
            <person name="Oviedo R.J."/>
            <person name="Parish B.J."/>
            <person name="Parker D.N."/>
            <person name="Parrish J."/>
            <person name="Parks K.L."/>
            <person name="Paul H.A."/>
            <person name="Payton B.A."/>
            <person name="Perez A."/>
            <person name="Perrin W."/>
            <person name="Pickens A."/>
            <person name="Primus E.L."/>
            <person name="Pu L.-L."/>
            <person name="Puazo M."/>
            <person name="Quiles M.M."/>
            <person name="Quiroz J.B."/>
            <person name="Rabata D."/>
            <person name="Reeves K."/>
            <person name="Ruiz S.J."/>
            <person name="Shao H."/>
            <person name="Sisson I."/>
            <person name="Sonaike T."/>
            <person name="Sorelle R.P."/>
            <person name="Sutton A.E."/>
            <person name="Svatek A.F."/>
            <person name="Svetz L.A."/>
            <person name="Tamerisa K.S."/>
            <person name="Taylor T.R."/>
            <person name="Teague B."/>
            <person name="Thomas N."/>
            <person name="Thorn R.D."/>
            <person name="Trejos Z.Y."/>
            <person name="Trevino B.K."/>
            <person name="Ukegbu O.N."/>
            <person name="Urban J.B."/>
            <person name="Vasquez L.I."/>
            <person name="Vera V.A."/>
            <person name="Villasana D.M."/>
            <person name="Wang L."/>
            <person name="Ward-Moore S."/>
            <person name="Warren J.T."/>
            <person name="Wei X."/>
            <person name="White F."/>
            <person name="Williamson A.L."/>
            <person name="Wleczyk R."/>
            <person name="Wooden H.S."/>
            <person name="Wooden S.H."/>
            <person name="Yen J."/>
            <person name="Yoon L."/>
            <person name="Yoon V."/>
            <person name="Zorrilla S.E."/>
            <person name="Nelson D."/>
            <person name="Kucherlapati R."/>
            <person name="Weinstock G."/>
            <person name="Gibbs R.A."/>
        </authorList>
    </citation>
    <scope>NUCLEOTIDE SEQUENCE [LARGE SCALE GENOMIC DNA]</scope>
</reference>
<reference key="4">
    <citation type="journal article" date="2004" name="Genome Res.">
        <title>The status, quality, and expansion of the NIH full-length cDNA project: the Mammalian Gene Collection (MGC).</title>
        <authorList>
            <consortium name="The MGC Project Team"/>
        </authorList>
    </citation>
    <scope>NUCLEOTIDE SEQUENCE [LARGE SCALE MRNA]</scope>
    <source>
        <tissue>Brain</tissue>
    </source>
</reference>
<reference key="5">
    <citation type="journal article" date="1998" name="J. Biol. Chem.">
        <title>PIR1, a novel phosphatase that exhibits high affinity to RNA ribonucleoprotein complexes.</title>
        <authorList>
            <person name="Yuan Y."/>
            <person name="Li D.-M."/>
            <person name="Sun H."/>
        </authorList>
    </citation>
    <scope>INTERACTION WITH DUSP11</scope>
</reference>
<reference key="6">
    <citation type="journal article" date="1998" name="Nucleic Acids Res.">
        <title>SAF-B couples transcription and pre-mRNA splicing to SAR/MAR elements.</title>
        <authorList>
            <person name="Nayler O."/>
            <person name="Straetling W."/>
            <person name="Bourquin J.-P."/>
            <person name="Stagljar I."/>
            <person name="Lindemann L."/>
            <person name="Jasper H."/>
            <person name="Hartmann A.M."/>
            <person name="Fackelmeyer F.O."/>
            <person name="Ullrich A."/>
            <person name="Stamm S."/>
        </authorList>
    </citation>
    <scope>INTERACTION WITH SAFB/SAFB1</scope>
</reference>
<reference key="7">
    <citation type="journal article" date="1999" name="EMBO J.">
        <title>The splicing factor-associated protein, p32, regulates RNA splicing by inhibiting ASF/SF2 RNA binding and phosphorylation.</title>
        <authorList>
            <person name="Petersen-Mahrt S.K."/>
            <person name="Estmer C."/>
            <person name="Ohrmalm C."/>
            <person name="Matthews D.A."/>
            <person name="Russell W.C."/>
            <person name="Akusjarvi G."/>
        </authorList>
    </citation>
    <scope>INTERACTION WITH C1QBP</scope>
</reference>
<reference key="8">
    <citation type="journal article" date="1999" name="J. Biol. Chem.">
        <title>Alternative splicing determines the intracellular localization of the novel nuclear protein Nop30 and its interaction with the splicing factor SRp30c.</title>
        <authorList>
            <person name="Stoss O."/>
            <person name="Schwaiger F.-W."/>
            <person name="Cooper T.A."/>
            <person name="Stamm S."/>
        </authorList>
    </citation>
    <scope>FUNCTION</scope>
    <scope>INTERACTION WITH NOL3</scope>
    <scope>SUBCELLULAR LOCATION</scope>
    <scope>TISSUE SPECIFICITY</scope>
</reference>
<reference key="9">
    <citation type="journal article" date="2001" name="Mol. Biol. Cell">
        <title>Stress-induced nuclear bodies are sites of accumulation of pre-mRNA processing factors.</title>
        <authorList>
            <person name="Denegri M."/>
            <person name="Chiodi I."/>
            <person name="Corioni M."/>
            <person name="Cobianchi F."/>
            <person name="Riva S."/>
            <person name="Biamonti G."/>
        </authorList>
    </citation>
    <scope>INTERACTION WITH SAFB/SAFB1</scope>
    <scope>SUBCELLULAR LOCATION</scope>
</reference>
<reference key="10">
    <citation type="journal article" date="2002" name="Hum. Mol. Genet.">
        <title>SRp30c-dependent stimulation of survival motor neuron (SMN) exon 7 inclusion is facilitated by a direct interaction with hTra2 beta 1.</title>
        <authorList>
            <person name="Young P.J."/>
            <person name="DiDonato C.J."/>
            <person name="Hu D."/>
            <person name="Kothary R."/>
            <person name="Androphy E.J."/>
            <person name="Lorson C.L."/>
        </authorList>
    </citation>
    <scope>FUNCTION</scope>
    <scope>INTERACTION WITH TRA2B</scope>
</reference>
<reference key="11">
    <citation type="journal article" date="2002" name="Mol. Cell. Biol.">
        <title>SRp30c is a repressor of 3' splice site utilization.</title>
        <authorList>
            <person name="Simard M.J."/>
            <person name="Chabot B."/>
        </authorList>
    </citation>
    <scope>FUNCTION</scope>
    <scope>IDENTIFICATION BY MASS SPECTROMETRY</scope>
    <scope>SUBCELLULAR LOCATION</scope>
</reference>
<reference key="12">
    <citation type="journal article" date="2003" name="J. Biol. Chem.">
        <title>Splicing factor SRp30c interaction with Y-box protein-1 confers nuclear YB-1 shuttling and alternative splice site selection.</title>
        <authorList>
            <person name="Raffetseder U."/>
            <person name="Frye B."/>
            <person name="Rauen T."/>
            <person name="Juerchott K."/>
            <person name="Royer H.-D."/>
            <person name="Jansen P.L."/>
            <person name="Mertens P.R."/>
        </authorList>
    </citation>
    <scope>FUNCTION</scope>
    <scope>INTERACTION WITH NSEP1</scope>
    <scope>SUBCELLULAR LOCATION</scope>
</reference>
<reference key="13">
    <citation type="journal article" date="2004" name="Genes Cells">
        <title>Tra2 beta, SF2/ASF and SRp30c modulate the function of an exonic splicing enhancer in exon 10 of tau pre-mRNA.</title>
        <authorList>
            <person name="Kondo S."/>
            <person name="Yamamoto N."/>
            <person name="Murakami T."/>
            <person name="Okumura M."/>
            <person name="Mayeda A."/>
            <person name="Imaizumi K."/>
        </authorList>
    </citation>
    <scope>FUNCTION</scope>
</reference>
<reference key="14">
    <citation type="journal article" date="2004" name="J. Neurochem.">
        <title>Tau exon 10, whose missplicing causes frontotemporal dementia, is regulated by an intricate interplay of cis elements and trans factors.</title>
        <authorList>
            <person name="Wang J."/>
            <person name="Gao Q.S."/>
            <person name="Wang Y."/>
            <person name="Lafyatis R."/>
            <person name="Stamm S."/>
            <person name="Andreadis A."/>
        </authorList>
    </citation>
    <scope>FUNCTION</scope>
</reference>
<reference key="15">
    <citation type="journal article" date="2005" name="J. Biol. Chem.">
        <title>Tau exons 2 and 10, which are misregulated in neurodegenerative diseases, are partly regulated by silencers which bind a SRp30c SRp55 complex that either recruits or antagonizes htra2beta1.</title>
        <authorList>
            <person name="Wang Y."/>
            <person name="Wang J."/>
            <person name="Gao L."/>
            <person name="Lafyatis R."/>
            <person name="Stamm S."/>
            <person name="Andreadis A."/>
        </authorList>
    </citation>
    <scope>FUNCTION</scope>
    <scope>INTERACTION WITH SRSF6 AND TRA2B</scope>
</reference>
<reference key="16">
    <citation type="journal article" date="2006" name="Cell">
        <title>Global, in vivo, and site-specific phosphorylation dynamics in signaling networks.</title>
        <authorList>
            <person name="Olsen J.V."/>
            <person name="Blagoev B."/>
            <person name="Gnad F."/>
            <person name="Macek B."/>
            <person name="Kumar C."/>
            <person name="Mortensen P."/>
            <person name="Mann M."/>
        </authorList>
    </citation>
    <scope>PHOSPHORYLATION [LARGE SCALE ANALYSIS] AT SER-211</scope>
    <scope>IDENTIFICATION BY MASS SPECTROMETRY [LARGE SCALE ANALYSIS]</scope>
    <source>
        <tissue>Cervix carcinoma</tissue>
    </source>
</reference>
<reference key="17">
    <citation type="journal article" date="2006" name="Nat. Biotechnol.">
        <title>A probability-based approach for high-throughput protein phosphorylation analysis and site localization.</title>
        <authorList>
            <person name="Beausoleil S.A."/>
            <person name="Villen J."/>
            <person name="Gerber S.A."/>
            <person name="Rush J."/>
            <person name="Gygi S.P."/>
        </authorList>
    </citation>
    <scope>PHOSPHORYLATION [LARGE SCALE ANALYSIS] AT SER-211</scope>
    <scope>IDENTIFICATION BY MASS SPECTROMETRY [LARGE SCALE ANALYSIS]</scope>
    <source>
        <tissue>Cervix carcinoma</tissue>
    </source>
</reference>
<reference key="18">
    <citation type="journal article" date="2008" name="J. Proteome Res.">
        <title>Phosphorylation analysis of primary human T lymphocytes using sequential IMAC and titanium oxide enrichment.</title>
        <authorList>
            <person name="Carrascal M."/>
            <person name="Ovelleiro D."/>
            <person name="Casas V."/>
            <person name="Gay M."/>
            <person name="Abian J."/>
        </authorList>
    </citation>
    <scope>PHOSPHORYLATION [LARGE SCALE ANALYSIS] AT SER-211</scope>
    <scope>IDENTIFICATION BY MASS SPECTROMETRY [LARGE SCALE ANALYSIS]</scope>
    <source>
        <tissue>T-cell</tissue>
    </source>
</reference>
<reference key="19">
    <citation type="journal article" date="2008" name="Proc. Natl. Acad. Sci. U.S.A.">
        <title>A quantitative atlas of mitotic phosphorylation.</title>
        <authorList>
            <person name="Dephoure N."/>
            <person name="Zhou C."/>
            <person name="Villen J."/>
            <person name="Beausoleil S.A."/>
            <person name="Bakalarski C.E."/>
            <person name="Elledge S.J."/>
            <person name="Gygi S.P."/>
        </authorList>
    </citation>
    <scope>PHOSPHORYLATION [LARGE SCALE ANALYSIS] AT SER-189; TYR-192; SER-195; SER-211 AND SER-216</scope>
    <scope>IDENTIFICATION BY MASS SPECTROMETRY [LARGE SCALE ANALYSIS]</scope>
    <source>
        <tissue>Cervix carcinoma</tissue>
    </source>
</reference>
<reference key="20">
    <citation type="journal article" date="2009" name="FEBS J.">
        <title>Functional association of human Ki-1/57 with pre-mRNA splicing events.</title>
        <authorList>
            <person name="Bressan G.C."/>
            <person name="Quaresma A.J."/>
            <person name="Moraes E.C."/>
            <person name="Manfiolli A.O."/>
            <person name="Passos D.O."/>
            <person name="Gomes M.D."/>
            <person name="Kobarg J."/>
        </authorList>
    </citation>
    <scope>INTERACTION WITH HABP4</scope>
</reference>
<reference key="21">
    <citation type="journal article" date="2010" name="Sci. Signal.">
        <title>Quantitative phosphoproteomics reveals widespread full phosphorylation site occupancy during mitosis.</title>
        <authorList>
            <person name="Olsen J.V."/>
            <person name="Vermeulen M."/>
            <person name="Santamaria A."/>
            <person name="Kumar C."/>
            <person name="Miller M.L."/>
            <person name="Jensen L.J."/>
            <person name="Gnad F."/>
            <person name="Cox J."/>
            <person name="Jensen T.S."/>
            <person name="Nigg E.A."/>
            <person name="Brunak S."/>
            <person name="Mann M."/>
        </authorList>
    </citation>
    <scope>PHOSPHORYLATION [LARGE SCALE ANALYSIS] AT SER-204; SER-211 AND SER-216</scope>
    <scope>IDENTIFICATION BY MASS SPECTROMETRY [LARGE SCALE ANALYSIS]</scope>
    <source>
        <tissue>Cervix carcinoma</tissue>
    </source>
</reference>
<reference key="22">
    <citation type="journal article" date="2011" name="BMC Syst. Biol.">
        <title>Initial characterization of the human central proteome.</title>
        <authorList>
            <person name="Burkard T.R."/>
            <person name="Planyavsky M."/>
            <person name="Kaupe I."/>
            <person name="Breitwieser F.P."/>
            <person name="Buerckstuemmer T."/>
            <person name="Bennett K.L."/>
            <person name="Superti-Furga G."/>
            <person name="Colinge J."/>
        </authorList>
    </citation>
    <scope>IDENTIFICATION BY MASS SPECTROMETRY [LARGE SCALE ANALYSIS]</scope>
</reference>
<reference key="23">
    <citation type="journal article" date="2011" name="Sci. Signal.">
        <title>System-wide temporal characterization of the proteome and phosphoproteome of human embryonic stem cell differentiation.</title>
        <authorList>
            <person name="Rigbolt K.T."/>
            <person name="Prokhorova T.A."/>
            <person name="Akimov V."/>
            <person name="Henningsen J."/>
            <person name="Johansen P.T."/>
            <person name="Kratchmarova I."/>
            <person name="Kassem M."/>
            <person name="Mann M."/>
            <person name="Olsen J.V."/>
            <person name="Blagoev B."/>
        </authorList>
    </citation>
    <scope>PHOSPHORYLATION [LARGE SCALE ANALYSIS] AT SER-189; SER-193; SER-204; SER-208; SER-211 AND SER-216</scope>
    <scope>IDENTIFICATION BY MASS SPECTROMETRY [LARGE SCALE ANALYSIS]</scope>
</reference>
<reference key="24">
    <citation type="journal article" date="2013" name="J. Proteome Res.">
        <title>Toward a comprehensive characterization of a human cancer cell phosphoproteome.</title>
        <authorList>
            <person name="Zhou H."/>
            <person name="Di Palma S."/>
            <person name="Preisinger C."/>
            <person name="Peng M."/>
            <person name="Polat A.N."/>
            <person name="Heck A.J."/>
            <person name="Mohammed S."/>
        </authorList>
    </citation>
    <scope>PHOSPHORYLATION [LARGE SCALE ANALYSIS] AT SER-211 AND SER-216</scope>
    <scope>IDENTIFICATION BY MASS SPECTROMETRY [LARGE SCALE ANALYSIS]</scope>
    <source>
        <tissue>Cervix carcinoma</tissue>
        <tissue>Erythroleukemia</tissue>
    </source>
</reference>
<reference key="25">
    <citation type="journal article" date="2014" name="J. Proteomics">
        <title>An enzyme assisted RP-RPLC approach for in-depth analysis of human liver phosphoproteome.</title>
        <authorList>
            <person name="Bian Y."/>
            <person name="Song C."/>
            <person name="Cheng K."/>
            <person name="Dong M."/>
            <person name="Wang F."/>
            <person name="Huang J."/>
            <person name="Sun D."/>
            <person name="Wang L."/>
            <person name="Ye M."/>
            <person name="Zou H."/>
        </authorList>
    </citation>
    <scope>PHOSPHORYLATION [LARGE SCALE ANALYSIS] AT SER-211 AND TYR-214</scope>
    <scope>IDENTIFICATION BY MASS SPECTROMETRY [LARGE SCALE ANALYSIS]</scope>
    <source>
        <tissue>Liver</tissue>
    </source>
</reference>
<reference key="26">
    <citation type="journal article" date="2015" name="Proteomics">
        <title>N-terminome analysis of the human mitochondrial proteome.</title>
        <authorList>
            <person name="Vaca Jacome A.S."/>
            <person name="Rabilloud T."/>
            <person name="Schaeffer-Reiss C."/>
            <person name="Rompais M."/>
            <person name="Ayoub D."/>
            <person name="Lane L."/>
            <person name="Bairoch A."/>
            <person name="Van Dorsselaer A."/>
            <person name="Carapito C."/>
        </authorList>
    </citation>
    <scope>IDENTIFICATION BY MASS SPECTROMETRY [LARGE SCALE ANALYSIS]</scope>
</reference>
<reference key="27">
    <citation type="journal article" date="2017" name="Nat. Struct. Mol. Biol.">
        <title>Site-specific mapping of the human SUMO proteome reveals co-modification with phosphorylation.</title>
        <authorList>
            <person name="Hendriks I.A."/>
            <person name="Lyon D."/>
            <person name="Young C."/>
            <person name="Jensen L.J."/>
            <person name="Vertegaal A.C."/>
            <person name="Nielsen M.L."/>
        </authorList>
    </citation>
    <scope>SUMOYLATION [LARGE SCALE ANALYSIS] AT LYS-36</scope>
    <scope>IDENTIFICATION BY MASS SPECTROMETRY [LARGE SCALE ANALYSIS]</scope>
</reference>
<gene>
    <name type="primary">SRSF9</name>
    <name type="synonym">SFRS9</name>
    <name type="synonym">SRP30C</name>
</gene>
<evidence type="ECO:0000250" key="1"/>
<evidence type="ECO:0000250" key="2">
    <source>
        <dbReference type="UniProtKB" id="Q9D0B0"/>
    </source>
</evidence>
<evidence type="ECO:0000255" key="3">
    <source>
        <dbReference type="PROSITE-ProRule" id="PRU00176"/>
    </source>
</evidence>
<evidence type="ECO:0000256" key="4">
    <source>
        <dbReference type="SAM" id="MobiDB-lite"/>
    </source>
</evidence>
<evidence type="ECO:0000269" key="5">
    <source>
    </source>
</evidence>
<evidence type="ECO:0000269" key="6">
    <source>
    </source>
</evidence>
<evidence type="ECO:0000269" key="7">
    <source>
    </source>
</evidence>
<evidence type="ECO:0000269" key="8">
    <source>
    </source>
</evidence>
<evidence type="ECO:0000269" key="9">
    <source>
    </source>
</evidence>
<evidence type="ECO:0000269" key="10">
    <source>
    </source>
</evidence>
<evidence type="ECO:0000269" key="11">
    <source>
    </source>
</evidence>
<evidence type="ECO:0000269" key="12">
    <source>
    </source>
</evidence>
<evidence type="ECO:0000269" key="13">
    <source>
    </source>
</evidence>
<evidence type="ECO:0000269" key="14">
    <source>
    </source>
</evidence>
<evidence type="ECO:0000269" key="15">
    <source>
    </source>
</evidence>
<evidence type="ECO:0000269" key="16">
    <source>
    </source>
</evidence>
<evidence type="ECO:0000269" key="17">
    <source>
    </source>
</evidence>
<evidence type="ECO:0000305" key="18"/>
<evidence type="ECO:0007744" key="19">
    <source>
    </source>
</evidence>
<evidence type="ECO:0007744" key="20">
    <source>
    </source>
</evidence>
<evidence type="ECO:0007744" key="21">
    <source>
    </source>
</evidence>
<evidence type="ECO:0007744" key="22">
    <source>
    </source>
</evidence>
<evidence type="ECO:0007744" key="23">
    <source>
    </source>
</evidence>
<evidence type="ECO:0007744" key="24">
    <source>
    </source>
</evidence>
<evidence type="ECO:0007744" key="25">
    <source>
    </source>
</evidence>
<evidence type="ECO:0007744" key="26">
    <source>
    </source>
</evidence>
<evidence type="ECO:0007744" key="27">
    <source>
    </source>
</evidence>
<protein>
    <recommendedName>
        <fullName>Serine/arginine-rich splicing factor 9</fullName>
    </recommendedName>
    <alternativeName>
        <fullName>Pre-mRNA-splicing factor SRp30C</fullName>
    </alternativeName>
    <alternativeName>
        <fullName>Splicing factor, arginine/serine-rich 9</fullName>
    </alternativeName>
</protein>
<feature type="chain" id="PRO_0000081935" description="Serine/arginine-rich splicing factor 9">
    <location>
        <begin position="1"/>
        <end position="221"/>
    </location>
</feature>
<feature type="domain" description="RRM 1" evidence="3">
    <location>
        <begin position="14"/>
        <end position="89"/>
    </location>
</feature>
<feature type="domain" description="RRM 2" evidence="3">
    <location>
        <begin position="111"/>
        <end position="187"/>
    </location>
</feature>
<feature type="region of interest" description="Interaction with SAFB1">
    <location>
        <begin position="188"/>
        <end position="200"/>
    </location>
</feature>
<feature type="region of interest" description="Disordered" evidence="4">
    <location>
        <begin position="189"/>
        <end position="221"/>
    </location>
</feature>
<feature type="compositionally biased region" description="Low complexity" evidence="4">
    <location>
        <begin position="189"/>
        <end position="198"/>
    </location>
</feature>
<feature type="modified residue" description="Phosphoserine" evidence="21 24">
    <location>
        <position position="189"/>
    </location>
</feature>
<feature type="modified residue" description="Phosphotyrosine" evidence="21">
    <location>
        <position position="192"/>
    </location>
</feature>
<feature type="modified residue" description="Phosphoserine" evidence="24">
    <location>
        <position position="193"/>
    </location>
</feature>
<feature type="modified residue" description="Phosphoserine" evidence="21">
    <location>
        <position position="195"/>
    </location>
</feature>
<feature type="modified residue" description="Phosphoserine" evidence="23 24">
    <location>
        <position position="204"/>
    </location>
</feature>
<feature type="modified residue" description="Phosphoserine" evidence="24">
    <location>
        <position position="208"/>
    </location>
</feature>
<feature type="modified residue" description="Phosphoserine" evidence="19 20 21 22 23 24 25 26">
    <location>
        <position position="211"/>
    </location>
</feature>
<feature type="modified residue" description="Phosphotyrosine" evidence="26">
    <location>
        <position position="214"/>
    </location>
</feature>
<feature type="modified residue" description="Phosphoserine" evidence="21 23 24 25">
    <location>
        <position position="216"/>
    </location>
</feature>
<feature type="cross-link" description="Glycyl lysine isopeptide (Lys-Gly) (interchain with G-Cter in SUMO2)" evidence="27">
    <location>
        <position position="36"/>
    </location>
</feature>
<proteinExistence type="evidence at protein level"/>
<comment type="function">
    <text evidence="6 8 9 10 11 12 13 15">Plays a role in constitutive splicing and can modulate the selection of alternative splice sites. Represses the splicing of MAPT/Tau exon 10.</text>
</comment>
<comment type="subunit">
    <text evidence="1 2 5 6 7 8 10 13 14 16 17">Interacts with KHDRBS3 (By similarity). Interacts with HABP4 (PubMed:19523114). Interacts with NOL3/ARC/NOP30 (PubMed:10196175). Interacts with NSEP1/YB-1/YB1 (PubMed:12604611). Interacts with SAFB/SAFB1 (PubMed:11694584, PubMed:9671816). Interacts with SRSF6/SFRS6 (PubMed:15695522). Interacts with TRA2B/SFRS10 (PubMed:11875052, PubMed:15695522). Interacts with C1QBP (PubMed:10022843). May also interact with DUSP11/PIR1 (PubMed:11694584).</text>
</comment>
<comment type="interaction">
    <interactant intactId="EBI-2949710">
        <id>Q13242</id>
    </interactant>
    <interactant intactId="EBI-523625">
        <id>Q5JVS0</id>
        <label>HABP4</label>
    </interactant>
    <organismsDiffer>false</organismsDiffer>
    <experiments>2</experiments>
</comment>
<comment type="interaction">
    <interactant intactId="EBI-2949710">
        <id>Q13242</id>
    </interactant>
    <interactant intactId="EBI-743526">
        <id>P38159</id>
        <label>RBMX</label>
    </interactant>
    <organismsDiffer>false</organismsDiffer>
    <experiments>4</experiments>
</comment>
<comment type="interaction">
    <interactant intactId="EBI-2949710">
        <id>Q13242</id>
    </interactant>
    <interactant intactId="EBI-395959">
        <id>Q15287</id>
        <label>RNPS1</label>
    </interactant>
    <organismsDiffer>false</organismsDiffer>
    <experiments>3</experiments>
</comment>
<comment type="interaction">
    <interactant intactId="EBI-2949710">
        <id>Q13242</id>
    </interactant>
    <interactant intactId="EBI-725485">
        <id>P62995</id>
        <label>TRA2B</label>
    </interactant>
    <organismsDiffer>false</organismsDiffer>
    <experiments>3</experiments>
</comment>
<comment type="subcellular location">
    <subcellularLocation>
        <location evidence="6 7 9 10">Nucleus</location>
    </subcellularLocation>
    <text>Cellular stresses such as heat shock may induce localization to discrete nuclear bodies termed SAM68 nuclear bodies (SNBs), HAP bodies, or stress bodies. Numerous splicing factors including SRSF1/SFRS1/SF2, SRSF7/SFRS7, SAFB and KHDRBS1/SAM68 accumulate at these structures, which may participate in the post-transcriptional regulation of mRNAs in stressed cells.</text>
</comment>
<comment type="tissue specificity">
    <text evidence="6">Expressed at high levels in the heart, kidney, pancreas and placenta, and at lower levels in the brain, liver, lung and skeletal muscle.</text>
</comment>
<comment type="PTM">
    <text evidence="1">Extensively phosphorylated on serine residues in the RS domain.</text>
</comment>
<comment type="similarity">
    <text evidence="18">Belongs to the splicing factor SR family.</text>
</comment>
<dbReference type="EMBL" id="U30825">
    <property type="protein sequence ID" value="AAA93069.1"/>
    <property type="molecule type" value="mRNA"/>
</dbReference>
<dbReference type="EMBL" id="U87279">
    <property type="protein sequence ID" value="AAD00626.1"/>
    <property type="molecule type" value="Genomic_DNA"/>
</dbReference>
<dbReference type="EMBL" id="U87277">
    <property type="protein sequence ID" value="AAD00626.1"/>
    <property type="status" value="JOINED"/>
    <property type="molecule type" value="Genomic_DNA"/>
</dbReference>
<dbReference type="EMBL" id="U87278">
    <property type="protein sequence ID" value="AAD00626.1"/>
    <property type="status" value="JOINED"/>
    <property type="molecule type" value="Genomic_DNA"/>
</dbReference>
<dbReference type="EMBL" id="AL021546">
    <property type="status" value="NOT_ANNOTATED_CDS"/>
    <property type="molecule type" value="Genomic_DNA"/>
</dbReference>
<dbReference type="EMBL" id="BC093971">
    <property type="protein sequence ID" value="AAH93971.1"/>
    <property type="molecule type" value="mRNA"/>
</dbReference>
<dbReference type="EMBL" id="BC093973">
    <property type="protein sequence ID" value="AAH93973.1"/>
    <property type="molecule type" value="mRNA"/>
</dbReference>
<dbReference type="CCDS" id="CCDS9199.1"/>
<dbReference type="PIR" id="S59075">
    <property type="entry name" value="S59075"/>
</dbReference>
<dbReference type="RefSeq" id="NP_003760.1">
    <property type="nucleotide sequence ID" value="NM_003769.3"/>
</dbReference>
<dbReference type="SMR" id="Q13242"/>
<dbReference type="BioGRID" id="114231">
    <property type="interactions" value="234"/>
</dbReference>
<dbReference type="CORUM" id="Q13242"/>
<dbReference type="DIP" id="DIP-40741N"/>
<dbReference type="FunCoup" id="Q13242">
    <property type="interactions" value="3825"/>
</dbReference>
<dbReference type="IntAct" id="Q13242">
    <property type="interactions" value="75"/>
</dbReference>
<dbReference type="MINT" id="Q13242"/>
<dbReference type="STRING" id="9606.ENSP00000229390"/>
<dbReference type="ChEMBL" id="CHEMBL4295813"/>
<dbReference type="GlyGen" id="Q13242">
    <property type="glycosylation" value="1 site, 1 O-linked glycan (1 site)"/>
</dbReference>
<dbReference type="iPTMnet" id="Q13242"/>
<dbReference type="PhosphoSitePlus" id="Q13242"/>
<dbReference type="SwissPalm" id="Q13242"/>
<dbReference type="BioMuta" id="SRSF9"/>
<dbReference type="DMDM" id="3929377"/>
<dbReference type="CPTAC" id="CPTAC-441"/>
<dbReference type="CPTAC" id="CPTAC-442"/>
<dbReference type="jPOST" id="Q13242"/>
<dbReference type="MassIVE" id="Q13242"/>
<dbReference type="PaxDb" id="9606-ENSP00000229390"/>
<dbReference type="PeptideAtlas" id="Q13242"/>
<dbReference type="ProteomicsDB" id="59246"/>
<dbReference type="Pumba" id="Q13242"/>
<dbReference type="TopDownProteomics" id="Q13242"/>
<dbReference type="Antibodypedia" id="31480">
    <property type="antibodies" value="256 antibodies from 28 providers"/>
</dbReference>
<dbReference type="DNASU" id="8683"/>
<dbReference type="Ensembl" id="ENST00000229390.8">
    <property type="protein sequence ID" value="ENSP00000229390.3"/>
    <property type="gene ID" value="ENSG00000111786.10"/>
</dbReference>
<dbReference type="GeneID" id="8683"/>
<dbReference type="KEGG" id="hsa:8683"/>
<dbReference type="MANE-Select" id="ENST00000229390.8">
    <property type="protein sequence ID" value="ENSP00000229390.3"/>
    <property type="RefSeq nucleotide sequence ID" value="NM_003769.3"/>
    <property type="RefSeq protein sequence ID" value="NP_003760.1"/>
</dbReference>
<dbReference type="UCSC" id="uc001tyi.4">
    <property type="organism name" value="human"/>
</dbReference>
<dbReference type="AGR" id="HGNC:10791"/>
<dbReference type="CTD" id="8683"/>
<dbReference type="DisGeNET" id="8683"/>
<dbReference type="GeneCards" id="SRSF9"/>
<dbReference type="HGNC" id="HGNC:10791">
    <property type="gene designation" value="SRSF9"/>
</dbReference>
<dbReference type="HPA" id="ENSG00000111786">
    <property type="expression patterns" value="Low tissue specificity"/>
</dbReference>
<dbReference type="MIM" id="601943">
    <property type="type" value="gene"/>
</dbReference>
<dbReference type="neXtProt" id="NX_Q13242"/>
<dbReference type="OpenTargets" id="ENSG00000111786"/>
<dbReference type="PharmGKB" id="PA35707"/>
<dbReference type="VEuPathDB" id="HostDB:ENSG00000111786"/>
<dbReference type="eggNOG" id="KOG0105">
    <property type="taxonomic scope" value="Eukaryota"/>
</dbReference>
<dbReference type="GeneTree" id="ENSGT00940000156839"/>
<dbReference type="HOGENOM" id="CLU_012062_34_0_1"/>
<dbReference type="InParanoid" id="Q13242"/>
<dbReference type="OMA" id="FPEPREN"/>
<dbReference type="OrthoDB" id="1099063at2759"/>
<dbReference type="PAN-GO" id="Q13242">
    <property type="GO annotations" value="3 GO annotations based on evolutionary models"/>
</dbReference>
<dbReference type="PhylomeDB" id="Q13242"/>
<dbReference type="TreeFam" id="TF106261"/>
<dbReference type="PathwayCommons" id="Q13242"/>
<dbReference type="Reactome" id="R-HSA-159236">
    <property type="pathway name" value="Transport of Mature mRNA derived from an Intron-Containing Transcript"/>
</dbReference>
<dbReference type="Reactome" id="R-HSA-72163">
    <property type="pathway name" value="mRNA Splicing - Major Pathway"/>
</dbReference>
<dbReference type="Reactome" id="R-HSA-72187">
    <property type="pathway name" value="mRNA 3'-end processing"/>
</dbReference>
<dbReference type="Reactome" id="R-HSA-72203">
    <property type="pathway name" value="Processing of Capped Intron-Containing Pre-mRNA"/>
</dbReference>
<dbReference type="Reactome" id="R-HSA-73856">
    <property type="pathway name" value="RNA Polymerase II Transcription Termination"/>
</dbReference>
<dbReference type="SignaLink" id="Q13242"/>
<dbReference type="BioGRID-ORCS" id="8683">
    <property type="hits" value="14 hits in 1151 CRISPR screens"/>
</dbReference>
<dbReference type="CD-CODE" id="81D2A7B6">
    <property type="entry name" value="Nuclear stress body"/>
</dbReference>
<dbReference type="CD-CODE" id="DEE660B4">
    <property type="entry name" value="Stress granule"/>
</dbReference>
<dbReference type="ChiTaRS" id="SRSF9">
    <property type="organism name" value="human"/>
</dbReference>
<dbReference type="GeneWiki" id="SFRS9"/>
<dbReference type="GenomeRNAi" id="8683"/>
<dbReference type="Pharos" id="Q13242">
    <property type="development level" value="Tbio"/>
</dbReference>
<dbReference type="PRO" id="PR:Q13242"/>
<dbReference type="Proteomes" id="UP000005640">
    <property type="component" value="Chromosome 12"/>
</dbReference>
<dbReference type="RNAct" id="Q13242">
    <property type="molecule type" value="protein"/>
</dbReference>
<dbReference type="Bgee" id="ENSG00000111786">
    <property type="expression patterns" value="Expressed in endometrium epithelium and 213 other cell types or tissues"/>
</dbReference>
<dbReference type="ExpressionAtlas" id="Q13242">
    <property type="expression patterns" value="baseline and differential"/>
</dbReference>
<dbReference type="GO" id="GO:0016607">
    <property type="term" value="C:nuclear speck"/>
    <property type="evidence" value="ECO:0000318"/>
    <property type="project" value="GO_Central"/>
</dbReference>
<dbReference type="GO" id="GO:0005730">
    <property type="term" value="C:nucleolus"/>
    <property type="evidence" value="ECO:0000314"/>
    <property type="project" value="HPA"/>
</dbReference>
<dbReference type="GO" id="GO:0005654">
    <property type="term" value="C:nucleoplasm"/>
    <property type="evidence" value="ECO:0000314"/>
    <property type="project" value="HPA"/>
</dbReference>
<dbReference type="GO" id="GO:0019904">
    <property type="term" value="F:protein domain specific binding"/>
    <property type="evidence" value="ECO:0000353"/>
    <property type="project" value="UniProtKB"/>
</dbReference>
<dbReference type="GO" id="GO:0003723">
    <property type="term" value="F:RNA binding"/>
    <property type="evidence" value="ECO:0007005"/>
    <property type="project" value="UniProtKB"/>
</dbReference>
<dbReference type="GO" id="GO:0000380">
    <property type="term" value="P:alternative mRNA splicing, via spliceosome"/>
    <property type="evidence" value="ECO:0000318"/>
    <property type="project" value="GO_Central"/>
</dbReference>
<dbReference type="GO" id="GO:0006397">
    <property type="term" value="P:mRNA processing"/>
    <property type="evidence" value="ECO:0000304"/>
    <property type="project" value="ProtInc"/>
</dbReference>
<dbReference type="GO" id="GO:0006376">
    <property type="term" value="P:mRNA splice site recognition"/>
    <property type="evidence" value="ECO:0000304"/>
    <property type="project" value="ProtInc"/>
</dbReference>
<dbReference type="GO" id="GO:0048025">
    <property type="term" value="P:negative regulation of mRNA splicing, via spliceosome"/>
    <property type="evidence" value="ECO:0000314"/>
    <property type="project" value="UniProtKB"/>
</dbReference>
<dbReference type="CDD" id="cd12598">
    <property type="entry name" value="RRM1_SRSF9"/>
    <property type="match status" value="1"/>
</dbReference>
<dbReference type="CDD" id="cd12768">
    <property type="entry name" value="RRM2_SRSF9"/>
    <property type="match status" value="1"/>
</dbReference>
<dbReference type="FunFam" id="3.30.70.330:FF:000053">
    <property type="entry name" value="Serine/arginine-rich splicing factor 1"/>
    <property type="match status" value="1"/>
</dbReference>
<dbReference type="FunFam" id="3.30.70.330:FF:000345">
    <property type="entry name" value="Serine/arginine-rich splicing factor 9"/>
    <property type="match status" value="1"/>
</dbReference>
<dbReference type="Gene3D" id="3.30.70.330">
    <property type="match status" value="2"/>
</dbReference>
<dbReference type="InterPro" id="IPR012677">
    <property type="entry name" value="Nucleotide-bd_a/b_plait_sf"/>
</dbReference>
<dbReference type="InterPro" id="IPR035979">
    <property type="entry name" value="RBD_domain_sf"/>
</dbReference>
<dbReference type="InterPro" id="IPR000504">
    <property type="entry name" value="RRM_dom"/>
</dbReference>
<dbReference type="InterPro" id="IPR050374">
    <property type="entry name" value="RRT5_SRSF_SR"/>
</dbReference>
<dbReference type="InterPro" id="IPR034503">
    <property type="entry name" value="SRSF9_RRM1"/>
</dbReference>
<dbReference type="InterPro" id="IPR034995">
    <property type="entry name" value="SRSF9_RRM2"/>
</dbReference>
<dbReference type="PANTHER" id="PTHR23003">
    <property type="entry name" value="RNA RECOGNITION MOTIF RRM DOMAIN CONTAINING PROTEIN"/>
    <property type="match status" value="1"/>
</dbReference>
<dbReference type="PANTHER" id="PTHR23003:SF65">
    <property type="entry name" value="RRM DOMAIN-CONTAINING PROTEIN"/>
    <property type="match status" value="1"/>
</dbReference>
<dbReference type="Pfam" id="PF00076">
    <property type="entry name" value="RRM_1"/>
    <property type="match status" value="2"/>
</dbReference>
<dbReference type="SMART" id="SM00360">
    <property type="entry name" value="RRM"/>
    <property type="match status" value="2"/>
</dbReference>
<dbReference type="SUPFAM" id="SSF54928">
    <property type="entry name" value="RNA-binding domain, RBD"/>
    <property type="match status" value="1"/>
</dbReference>
<dbReference type="PROSITE" id="PS50102">
    <property type="entry name" value="RRM"/>
    <property type="match status" value="2"/>
</dbReference>
<keyword id="KW-1017">Isopeptide bond</keyword>
<keyword id="KW-0507">mRNA processing</keyword>
<keyword id="KW-0508">mRNA splicing</keyword>
<keyword id="KW-0539">Nucleus</keyword>
<keyword id="KW-0597">Phosphoprotein</keyword>
<keyword id="KW-1267">Proteomics identification</keyword>
<keyword id="KW-1185">Reference proteome</keyword>
<keyword id="KW-0677">Repeat</keyword>
<keyword id="KW-0678">Repressor</keyword>
<keyword id="KW-0694">RNA-binding</keyword>
<keyword id="KW-0832">Ubl conjugation</keyword>
<name>SRSF9_HUMAN</name>
<organism>
    <name type="scientific">Homo sapiens</name>
    <name type="common">Human</name>
    <dbReference type="NCBI Taxonomy" id="9606"/>
    <lineage>
        <taxon>Eukaryota</taxon>
        <taxon>Metazoa</taxon>
        <taxon>Chordata</taxon>
        <taxon>Craniata</taxon>
        <taxon>Vertebrata</taxon>
        <taxon>Euteleostomi</taxon>
        <taxon>Mammalia</taxon>
        <taxon>Eutheria</taxon>
        <taxon>Euarchontoglires</taxon>
        <taxon>Primates</taxon>
        <taxon>Haplorrhini</taxon>
        <taxon>Catarrhini</taxon>
        <taxon>Hominidae</taxon>
        <taxon>Homo</taxon>
    </lineage>
</organism>
<accession>Q13242</accession>
<accession>Q52LD1</accession>
<sequence>MSGWADERGGEGDGRIYVGNLPTDVREKDLEDLFYKYGRIREIELKNRHGLVPFAFVRFEDPRDAEDAIYGRNGYDYGQCRLRVEFPRTYGGRGGWPRGGRNGPPTRRSDFRVLVSGLPPSGSWQDLKDHMREAGDVCYADVQKDGVGMVEYLRKEDMEYALRKLDDTKFRSHEGETSYIRVYPERSTSYGYSRSRSGSRGRDSPYQSRGSPHYFSPFRPY</sequence>